<keyword id="KW-1003">Cell membrane</keyword>
<keyword id="KW-0378">Hydrolase</keyword>
<keyword id="KW-0472">Membrane</keyword>
<keyword id="KW-0479">Metal-binding</keyword>
<keyword id="KW-0482">Metalloprotease</keyword>
<keyword id="KW-0645">Protease</keyword>
<keyword id="KW-1185">Reference proteome</keyword>
<keyword id="KW-0346">Stress response</keyword>
<keyword id="KW-0812">Transmembrane</keyword>
<keyword id="KW-1133">Transmembrane helix</keyword>
<keyword id="KW-0862">Zinc</keyword>
<proteinExistence type="inferred from homology"/>
<gene>
    <name evidence="1" type="primary">htpX</name>
    <name type="ordered locus">BCI_0307</name>
</gene>
<sequence length="291" mass="32134">MMRIVIFLLTNLAVMVVFGILLTCVGTHSSNTVRLMIISGLFGFCGAFISLLMSKFIALRSVGGKVISQPQNETEHWLLNIILNQAQKIGITMPQVAIYNAPDMNAFATGPSRNNSLVAVSTGLLQNMPRTEIEAVIAHEISHISNGDMVTITLISGIVNTFVIFISRFLAQLTAGFIGSNNEESNNGNKLVYMIVSTILELAFGILASIIVLWFSRYREFYADAGSANIVGCDKMIAALQRLKTSYEPKVTNNIKIFCINGYQKSLSEFFMSHPPLNKRIEALRYGTYMK</sequence>
<reference key="1">
    <citation type="journal article" date="2006" name="PLoS Biol.">
        <title>Metabolic complementarity and genomics of the dual bacterial symbiosis of sharpshooters.</title>
        <authorList>
            <person name="Wu D."/>
            <person name="Daugherty S.C."/>
            <person name="Van Aken S.E."/>
            <person name="Pai G.H."/>
            <person name="Watkins K.L."/>
            <person name="Khouri H."/>
            <person name="Tallon L.J."/>
            <person name="Zaborsky J.M."/>
            <person name="Dunbar H.E."/>
            <person name="Tran P.L."/>
            <person name="Moran N.A."/>
            <person name="Eisen J.A."/>
        </authorList>
    </citation>
    <scope>NUCLEOTIDE SEQUENCE [LARGE SCALE GENOMIC DNA]</scope>
</reference>
<comment type="cofactor">
    <cofactor evidence="1">
        <name>Zn(2+)</name>
        <dbReference type="ChEBI" id="CHEBI:29105"/>
    </cofactor>
    <text evidence="1">Binds 1 zinc ion per subunit.</text>
</comment>
<comment type="subcellular location">
    <subcellularLocation>
        <location evidence="1">Cell membrane</location>
        <topology evidence="1">Multi-pass membrane protein</topology>
    </subcellularLocation>
</comment>
<comment type="similarity">
    <text evidence="1">Belongs to the peptidase M48B family.</text>
</comment>
<accession>Q1LTF8</accession>
<protein>
    <recommendedName>
        <fullName evidence="1">Protease HtpX</fullName>
        <ecNumber evidence="1">3.4.24.-</ecNumber>
    </recommendedName>
    <alternativeName>
        <fullName evidence="1">Heat shock protein HtpX</fullName>
    </alternativeName>
</protein>
<organism>
    <name type="scientific">Baumannia cicadellinicola subsp. Homalodisca coagulata</name>
    <dbReference type="NCBI Taxonomy" id="374463"/>
    <lineage>
        <taxon>Bacteria</taxon>
        <taxon>Pseudomonadati</taxon>
        <taxon>Pseudomonadota</taxon>
        <taxon>Gammaproteobacteria</taxon>
        <taxon>Candidatus Palibaumannia</taxon>
    </lineage>
</organism>
<name>HTPX_BAUCH</name>
<dbReference type="EC" id="3.4.24.-" evidence="1"/>
<dbReference type="EMBL" id="CP000238">
    <property type="protein sequence ID" value="ABF14002.1"/>
    <property type="molecule type" value="Genomic_DNA"/>
</dbReference>
<dbReference type="RefSeq" id="WP_011520489.1">
    <property type="nucleotide sequence ID" value="NC_007984.1"/>
</dbReference>
<dbReference type="SMR" id="Q1LTF8"/>
<dbReference type="STRING" id="374463.BCI_0307"/>
<dbReference type="MEROPS" id="M48.002"/>
<dbReference type="KEGG" id="bci:BCI_0307"/>
<dbReference type="HOGENOM" id="CLU_042266_1_0_6"/>
<dbReference type="OrthoDB" id="15218at2"/>
<dbReference type="Proteomes" id="UP000002427">
    <property type="component" value="Chromosome"/>
</dbReference>
<dbReference type="GO" id="GO:0005886">
    <property type="term" value="C:plasma membrane"/>
    <property type="evidence" value="ECO:0007669"/>
    <property type="project" value="UniProtKB-SubCell"/>
</dbReference>
<dbReference type="GO" id="GO:0004222">
    <property type="term" value="F:metalloendopeptidase activity"/>
    <property type="evidence" value="ECO:0007669"/>
    <property type="project" value="UniProtKB-UniRule"/>
</dbReference>
<dbReference type="GO" id="GO:0008270">
    <property type="term" value="F:zinc ion binding"/>
    <property type="evidence" value="ECO:0007669"/>
    <property type="project" value="UniProtKB-UniRule"/>
</dbReference>
<dbReference type="GO" id="GO:0006508">
    <property type="term" value="P:proteolysis"/>
    <property type="evidence" value="ECO:0007669"/>
    <property type="project" value="UniProtKB-KW"/>
</dbReference>
<dbReference type="CDD" id="cd07335">
    <property type="entry name" value="M48B_HtpX_like"/>
    <property type="match status" value="1"/>
</dbReference>
<dbReference type="Gene3D" id="3.30.2010.10">
    <property type="entry name" value="Metalloproteases ('zincins'), catalytic domain"/>
    <property type="match status" value="1"/>
</dbReference>
<dbReference type="HAMAP" id="MF_00188">
    <property type="entry name" value="Pept_M48_protease_HtpX"/>
    <property type="match status" value="1"/>
</dbReference>
<dbReference type="InterPro" id="IPR050083">
    <property type="entry name" value="HtpX_protease"/>
</dbReference>
<dbReference type="InterPro" id="IPR022919">
    <property type="entry name" value="Pept_M48_protease_HtpX"/>
</dbReference>
<dbReference type="InterPro" id="IPR001915">
    <property type="entry name" value="Peptidase_M48"/>
</dbReference>
<dbReference type="NCBIfam" id="NF003965">
    <property type="entry name" value="PRK05457.1"/>
    <property type="match status" value="1"/>
</dbReference>
<dbReference type="PANTHER" id="PTHR43221">
    <property type="entry name" value="PROTEASE HTPX"/>
    <property type="match status" value="1"/>
</dbReference>
<dbReference type="PANTHER" id="PTHR43221:SF1">
    <property type="entry name" value="PROTEASE HTPX"/>
    <property type="match status" value="1"/>
</dbReference>
<dbReference type="Pfam" id="PF01435">
    <property type="entry name" value="Peptidase_M48"/>
    <property type="match status" value="1"/>
</dbReference>
<dbReference type="PROSITE" id="PS00142">
    <property type="entry name" value="ZINC_PROTEASE"/>
    <property type="match status" value="1"/>
</dbReference>
<feature type="chain" id="PRO_1000020850" description="Protease HtpX">
    <location>
        <begin position="1"/>
        <end position="291"/>
    </location>
</feature>
<feature type="transmembrane region" description="Helical" evidence="1">
    <location>
        <begin position="4"/>
        <end position="24"/>
    </location>
</feature>
<feature type="transmembrane region" description="Helical" evidence="1">
    <location>
        <begin position="37"/>
        <end position="57"/>
    </location>
</feature>
<feature type="transmembrane region" description="Helical" evidence="1">
    <location>
        <begin position="147"/>
        <end position="167"/>
    </location>
</feature>
<feature type="transmembrane region" description="Helical" evidence="1">
    <location>
        <begin position="195"/>
        <end position="215"/>
    </location>
</feature>
<feature type="active site" evidence="1">
    <location>
        <position position="140"/>
    </location>
</feature>
<feature type="binding site" evidence="1">
    <location>
        <position position="139"/>
    </location>
    <ligand>
        <name>Zn(2+)</name>
        <dbReference type="ChEBI" id="CHEBI:29105"/>
        <note>catalytic</note>
    </ligand>
</feature>
<feature type="binding site" evidence="1">
    <location>
        <position position="143"/>
    </location>
    <ligand>
        <name>Zn(2+)</name>
        <dbReference type="ChEBI" id="CHEBI:29105"/>
        <note>catalytic</note>
    </ligand>
</feature>
<feature type="binding site" evidence="1">
    <location>
        <position position="220"/>
    </location>
    <ligand>
        <name>Zn(2+)</name>
        <dbReference type="ChEBI" id="CHEBI:29105"/>
        <note>catalytic</note>
    </ligand>
</feature>
<evidence type="ECO:0000255" key="1">
    <source>
        <dbReference type="HAMAP-Rule" id="MF_00188"/>
    </source>
</evidence>